<gene>
    <name evidence="1" type="primary">tpiA</name>
    <name type="ordered locus">ABSDF3187</name>
</gene>
<protein>
    <recommendedName>
        <fullName evidence="1">Triosephosphate isomerase</fullName>
        <shortName evidence="1">TIM</shortName>
        <shortName evidence="1">TPI</shortName>
        <ecNumber evidence="1">5.3.1.1</ecNumber>
    </recommendedName>
    <alternativeName>
        <fullName evidence="1">Triose-phosphate isomerase</fullName>
    </alternativeName>
</protein>
<sequence>MSGSTITPWVVGNWKMNPMRANANQLIEEFKQLLQQNQIADENCHVGVAPVSIALTTVQAQLQDAARTVYTVAQDVSRVAGTGAYTGEVSAELLKDSQINFVLVGHSERRDIFGDNVEILKAKLQNALNAGMTVIYCVGESLEQREQGQAEQVVLQQICDIAPVVTAEQWQNQVVIAYEPIWAIGTGKTASPQDAQAMHAKIREGLCQLTPAGSNIAILYGGSVKAENAVELAACPDINGALVGGASLNAASFYQIVQAFAQSK</sequence>
<feature type="chain" id="PRO_1000096468" description="Triosephosphate isomerase">
    <location>
        <begin position="1"/>
        <end position="264"/>
    </location>
</feature>
<feature type="active site" description="Electrophile" evidence="1">
    <location>
        <position position="106"/>
    </location>
</feature>
<feature type="active site" description="Proton acceptor" evidence="1">
    <location>
        <position position="179"/>
    </location>
</feature>
<feature type="binding site" evidence="1">
    <location>
        <begin position="13"/>
        <end position="15"/>
    </location>
    <ligand>
        <name>substrate</name>
    </ligand>
</feature>
<feature type="binding site" evidence="1">
    <location>
        <position position="185"/>
    </location>
    <ligand>
        <name>substrate</name>
    </ligand>
</feature>
<feature type="binding site" evidence="1">
    <location>
        <position position="223"/>
    </location>
    <ligand>
        <name>substrate</name>
    </ligand>
</feature>
<feature type="binding site" evidence="1">
    <location>
        <begin position="244"/>
        <end position="245"/>
    </location>
    <ligand>
        <name>substrate</name>
    </ligand>
</feature>
<accession>B0VLU6</accession>
<name>TPIS_ACIBS</name>
<keyword id="KW-0963">Cytoplasm</keyword>
<keyword id="KW-0312">Gluconeogenesis</keyword>
<keyword id="KW-0324">Glycolysis</keyword>
<keyword id="KW-0413">Isomerase</keyword>
<comment type="function">
    <text evidence="1">Involved in the gluconeogenesis. Catalyzes stereospecifically the conversion of dihydroxyacetone phosphate (DHAP) to D-glyceraldehyde-3-phosphate (G3P).</text>
</comment>
<comment type="catalytic activity">
    <reaction evidence="1">
        <text>D-glyceraldehyde 3-phosphate = dihydroxyacetone phosphate</text>
        <dbReference type="Rhea" id="RHEA:18585"/>
        <dbReference type="ChEBI" id="CHEBI:57642"/>
        <dbReference type="ChEBI" id="CHEBI:59776"/>
        <dbReference type="EC" id="5.3.1.1"/>
    </reaction>
</comment>
<comment type="pathway">
    <text evidence="1">Carbohydrate biosynthesis; gluconeogenesis.</text>
</comment>
<comment type="pathway">
    <text evidence="1">Carbohydrate degradation; glycolysis; D-glyceraldehyde 3-phosphate from glycerone phosphate: step 1/1.</text>
</comment>
<comment type="subunit">
    <text evidence="1">Homodimer.</text>
</comment>
<comment type="subcellular location">
    <subcellularLocation>
        <location evidence="1">Cytoplasm</location>
    </subcellularLocation>
</comment>
<comment type="similarity">
    <text evidence="1">Belongs to the triosephosphate isomerase family.</text>
</comment>
<organism>
    <name type="scientific">Acinetobacter baumannii (strain SDF)</name>
    <dbReference type="NCBI Taxonomy" id="509170"/>
    <lineage>
        <taxon>Bacteria</taxon>
        <taxon>Pseudomonadati</taxon>
        <taxon>Pseudomonadota</taxon>
        <taxon>Gammaproteobacteria</taxon>
        <taxon>Moraxellales</taxon>
        <taxon>Moraxellaceae</taxon>
        <taxon>Acinetobacter</taxon>
        <taxon>Acinetobacter calcoaceticus/baumannii complex</taxon>
    </lineage>
</organism>
<dbReference type="EC" id="5.3.1.1" evidence="1"/>
<dbReference type="EMBL" id="CU468230">
    <property type="protein sequence ID" value="CAP02462.1"/>
    <property type="molecule type" value="Genomic_DNA"/>
</dbReference>
<dbReference type="SMR" id="B0VLU6"/>
<dbReference type="KEGG" id="abm:ABSDF3187"/>
<dbReference type="HOGENOM" id="CLU_024251_2_1_6"/>
<dbReference type="UniPathway" id="UPA00109">
    <property type="reaction ID" value="UER00189"/>
</dbReference>
<dbReference type="UniPathway" id="UPA00138"/>
<dbReference type="Proteomes" id="UP000001741">
    <property type="component" value="Chromosome"/>
</dbReference>
<dbReference type="GO" id="GO:0005829">
    <property type="term" value="C:cytosol"/>
    <property type="evidence" value="ECO:0007669"/>
    <property type="project" value="TreeGrafter"/>
</dbReference>
<dbReference type="GO" id="GO:0004807">
    <property type="term" value="F:triose-phosphate isomerase activity"/>
    <property type="evidence" value="ECO:0007669"/>
    <property type="project" value="UniProtKB-UniRule"/>
</dbReference>
<dbReference type="GO" id="GO:0006094">
    <property type="term" value="P:gluconeogenesis"/>
    <property type="evidence" value="ECO:0007669"/>
    <property type="project" value="UniProtKB-UniRule"/>
</dbReference>
<dbReference type="GO" id="GO:0046166">
    <property type="term" value="P:glyceraldehyde-3-phosphate biosynthetic process"/>
    <property type="evidence" value="ECO:0007669"/>
    <property type="project" value="TreeGrafter"/>
</dbReference>
<dbReference type="GO" id="GO:0019563">
    <property type="term" value="P:glycerol catabolic process"/>
    <property type="evidence" value="ECO:0007669"/>
    <property type="project" value="TreeGrafter"/>
</dbReference>
<dbReference type="GO" id="GO:0006096">
    <property type="term" value="P:glycolytic process"/>
    <property type="evidence" value="ECO:0007669"/>
    <property type="project" value="UniProtKB-UniRule"/>
</dbReference>
<dbReference type="CDD" id="cd00311">
    <property type="entry name" value="TIM"/>
    <property type="match status" value="1"/>
</dbReference>
<dbReference type="FunFam" id="3.20.20.70:FF:000016">
    <property type="entry name" value="Triosephosphate isomerase"/>
    <property type="match status" value="1"/>
</dbReference>
<dbReference type="Gene3D" id="3.20.20.70">
    <property type="entry name" value="Aldolase class I"/>
    <property type="match status" value="1"/>
</dbReference>
<dbReference type="HAMAP" id="MF_00147_B">
    <property type="entry name" value="TIM_B"/>
    <property type="match status" value="1"/>
</dbReference>
<dbReference type="InterPro" id="IPR013785">
    <property type="entry name" value="Aldolase_TIM"/>
</dbReference>
<dbReference type="InterPro" id="IPR035990">
    <property type="entry name" value="TIM_sf"/>
</dbReference>
<dbReference type="InterPro" id="IPR022896">
    <property type="entry name" value="TrioseP_Isoase_bac/euk"/>
</dbReference>
<dbReference type="InterPro" id="IPR000652">
    <property type="entry name" value="Triosephosphate_isomerase"/>
</dbReference>
<dbReference type="InterPro" id="IPR020861">
    <property type="entry name" value="Triosephosphate_isomerase_AS"/>
</dbReference>
<dbReference type="NCBIfam" id="TIGR00419">
    <property type="entry name" value="tim"/>
    <property type="match status" value="1"/>
</dbReference>
<dbReference type="PANTHER" id="PTHR21139">
    <property type="entry name" value="TRIOSEPHOSPHATE ISOMERASE"/>
    <property type="match status" value="1"/>
</dbReference>
<dbReference type="PANTHER" id="PTHR21139:SF42">
    <property type="entry name" value="TRIOSEPHOSPHATE ISOMERASE"/>
    <property type="match status" value="1"/>
</dbReference>
<dbReference type="Pfam" id="PF00121">
    <property type="entry name" value="TIM"/>
    <property type="match status" value="1"/>
</dbReference>
<dbReference type="SUPFAM" id="SSF51351">
    <property type="entry name" value="Triosephosphate isomerase (TIM)"/>
    <property type="match status" value="1"/>
</dbReference>
<dbReference type="PROSITE" id="PS00171">
    <property type="entry name" value="TIM_1"/>
    <property type="match status" value="1"/>
</dbReference>
<dbReference type="PROSITE" id="PS51440">
    <property type="entry name" value="TIM_2"/>
    <property type="match status" value="1"/>
</dbReference>
<proteinExistence type="inferred from homology"/>
<evidence type="ECO:0000255" key="1">
    <source>
        <dbReference type="HAMAP-Rule" id="MF_00147"/>
    </source>
</evidence>
<reference key="1">
    <citation type="journal article" date="2008" name="PLoS ONE">
        <title>Comparative analysis of Acinetobacters: three genomes for three lifestyles.</title>
        <authorList>
            <person name="Vallenet D."/>
            <person name="Nordmann P."/>
            <person name="Barbe V."/>
            <person name="Poirel L."/>
            <person name="Mangenot S."/>
            <person name="Bataille E."/>
            <person name="Dossat C."/>
            <person name="Gas S."/>
            <person name="Kreimeyer A."/>
            <person name="Lenoble P."/>
            <person name="Oztas S."/>
            <person name="Poulain J."/>
            <person name="Segurens B."/>
            <person name="Robert C."/>
            <person name="Abergel C."/>
            <person name="Claverie J.-M."/>
            <person name="Raoult D."/>
            <person name="Medigue C."/>
            <person name="Weissenbach J."/>
            <person name="Cruveiller S."/>
        </authorList>
    </citation>
    <scope>NUCLEOTIDE SEQUENCE [LARGE SCALE GENOMIC DNA]</scope>
    <source>
        <strain>SDF</strain>
    </source>
</reference>